<gene>
    <name type="primary">mt-co2</name>
    <name type="synonym">coii</name>
    <name type="synonym">coxii</name>
    <name type="synonym">mtco2</name>
</gene>
<feature type="chain" id="PRO_0000183597" description="Cytochrome c oxidase subunit 2">
    <location>
        <begin position="1"/>
        <end position="230"/>
    </location>
</feature>
<feature type="topological domain" description="Mitochondrial intermembrane" evidence="3">
    <location>
        <begin position="1"/>
        <end position="14"/>
    </location>
</feature>
<feature type="transmembrane region" description="Helical; Name=I" evidence="3">
    <location>
        <begin position="15"/>
        <end position="45"/>
    </location>
</feature>
<feature type="topological domain" description="Mitochondrial matrix" evidence="3">
    <location>
        <begin position="46"/>
        <end position="59"/>
    </location>
</feature>
<feature type="transmembrane region" description="Helical; Name=II" evidence="3">
    <location>
        <begin position="60"/>
        <end position="87"/>
    </location>
</feature>
<feature type="topological domain" description="Mitochondrial intermembrane" evidence="3">
    <location>
        <begin position="88"/>
        <end position="230"/>
    </location>
</feature>
<feature type="binding site" evidence="3">
    <location>
        <position position="161"/>
    </location>
    <ligand>
        <name>Cu cation</name>
        <dbReference type="ChEBI" id="CHEBI:23378"/>
        <label>A1</label>
    </ligand>
</feature>
<feature type="binding site" evidence="3">
    <location>
        <position position="196"/>
    </location>
    <ligand>
        <name>Cu cation</name>
        <dbReference type="ChEBI" id="CHEBI:23378"/>
        <label>A1</label>
    </ligand>
</feature>
<feature type="binding site" evidence="3">
    <location>
        <position position="196"/>
    </location>
    <ligand>
        <name>Cu cation</name>
        <dbReference type="ChEBI" id="CHEBI:23378"/>
        <label>A2</label>
    </ligand>
</feature>
<feature type="binding site" evidence="3">
    <location>
        <position position="198"/>
    </location>
    <ligand>
        <name>Cu cation</name>
        <dbReference type="ChEBI" id="CHEBI:23378"/>
        <label>A2</label>
    </ligand>
</feature>
<feature type="binding site" evidence="3">
    <location>
        <position position="198"/>
    </location>
    <ligand>
        <name>Mg(2+)</name>
        <dbReference type="ChEBI" id="CHEBI:18420"/>
        <note>ligand shared with MT-CO1</note>
    </ligand>
</feature>
<feature type="binding site" evidence="3">
    <location>
        <position position="200"/>
    </location>
    <ligand>
        <name>Cu cation</name>
        <dbReference type="ChEBI" id="CHEBI:23378"/>
        <label>A1</label>
    </ligand>
</feature>
<feature type="binding site" evidence="3">
    <location>
        <position position="200"/>
    </location>
    <ligand>
        <name>Cu cation</name>
        <dbReference type="ChEBI" id="CHEBI:23378"/>
        <label>A2</label>
    </ligand>
</feature>
<feature type="binding site" evidence="3">
    <location>
        <position position="204"/>
    </location>
    <ligand>
        <name>Cu cation</name>
        <dbReference type="ChEBI" id="CHEBI:23378"/>
        <label>A2</label>
    </ligand>
</feature>
<feature type="binding site" evidence="3">
    <location>
        <position position="207"/>
    </location>
    <ligand>
        <name>Cu cation</name>
        <dbReference type="ChEBI" id="CHEBI:23378"/>
        <label>A1</label>
    </ligand>
</feature>
<name>COX2_GADMO</name>
<protein>
    <recommendedName>
        <fullName>Cytochrome c oxidase subunit 2</fullName>
        <ecNumber>7.1.1.9</ecNumber>
    </recommendedName>
    <alternativeName>
        <fullName>Cytochrome c oxidase polypeptide II</fullName>
    </alternativeName>
</protein>
<keyword id="KW-0186">Copper</keyword>
<keyword id="KW-0249">Electron transport</keyword>
<keyword id="KW-0460">Magnesium</keyword>
<keyword id="KW-0472">Membrane</keyword>
<keyword id="KW-0479">Metal-binding</keyword>
<keyword id="KW-0496">Mitochondrion</keyword>
<keyword id="KW-0999">Mitochondrion inner membrane</keyword>
<keyword id="KW-1185">Reference proteome</keyword>
<keyword id="KW-0679">Respiratory chain</keyword>
<keyword id="KW-1278">Translocase</keyword>
<keyword id="KW-0812">Transmembrane</keyword>
<keyword id="KW-1133">Transmembrane helix</keyword>
<keyword id="KW-0813">Transport</keyword>
<sequence length="230" mass="26013">MAHPSQLGFQDAASPVMEELLHFHDHALMIVFLISTLVLYIIVAMVSTKLTNKYILDSQEIEIIWTVLPAVILILIALPSLRILYLMDEINDPHLTIKAMGHQWYWSYEYTDYEDLGFDSYMIPTQDLAPGQFRLLEADHRMVVPVESPIRILISAEDVLHSWAVPALGIKMDAVPGRLNQTAFITSRPGVFYGQCSEICGANHSFMPIVVEAVPLEHFESWSSLMLEDA</sequence>
<evidence type="ECO:0000250" key="1">
    <source>
        <dbReference type="UniProtKB" id="P00403"/>
    </source>
</evidence>
<evidence type="ECO:0000250" key="2">
    <source>
        <dbReference type="UniProtKB" id="P00410"/>
    </source>
</evidence>
<evidence type="ECO:0000250" key="3">
    <source>
        <dbReference type="UniProtKB" id="P68530"/>
    </source>
</evidence>
<evidence type="ECO:0000305" key="4"/>
<organism>
    <name type="scientific">Gadus morhua</name>
    <name type="common">Atlantic cod</name>
    <dbReference type="NCBI Taxonomy" id="8049"/>
    <lineage>
        <taxon>Eukaryota</taxon>
        <taxon>Metazoa</taxon>
        <taxon>Chordata</taxon>
        <taxon>Craniata</taxon>
        <taxon>Vertebrata</taxon>
        <taxon>Euteleostomi</taxon>
        <taxon>Actinopterygii</taxon>
        <taxon>Neopterygii</taxon>
        <taxon>Teleostei</taxon>
        <taxon>Neoteleostei</taxon>
        <taxon>Acanthomorphata</taxon>
        <taxon>Zeiogadaria</taxon>
        <taxon>Gadariae</taxon>
        <taxon>Gadiformes</taxon>
        <taxon>Gadoidei</taxon>
        <taxon>Gadidae</taxon>
        <taxon>Gadus</taxon>
    </lineage>
</organism>
<reference key="1">
    <citation type="journal article" date="1994" name="Biochim. Biophys. Acta">
        <title>Sequence analysis of 12 structural genes and a novel non-coding region from mitochondrial DNA of Atlantic cod, Gadus morhua.</title>
        <authorList>
            <person name="Johansen S."/>
            <person name="Johansen T."/>
        </authorList>
    </citation>
    <scope>NUCLEOTIDE SEQUENCE [GENOMIC DNA]</scope>
    <source>
        <strain>Norwegian coastal 1</strain>
    </source>
</reference>
<reference key="2">
    <citation type="journal article" date="1996" name="Mol. Mar. Biol. Biotechnol.">
        <title>The complete mitochondrial DNA sequence of Atlantic cod (Gadus morhua): relevance to taxonomic studies among codfishes.</title>
        <authorList>
            <person name="Johansen S."/>
            <person name="Bakke I."/>
        </authorList>
    </citation>
    <scope>NUCLEOTIDE SEQUENCE [GENOMIC DNA]</scope>
    <source>
        <strain>Norwegian coastal 1</strain>
    </source>
</reference>
<comment type="function">
    <text evidence="2">Component of the cytochrome c oxidase, the last enzyme in the mitochondrial electron transport chain which drives oxidative phosphorylation. The respiratory chain contains 3 multisubunit complexes succinate dehydrogenase (complex II, CII), ubiquinol-cytochrome c oxidoreductase (cytochrome b-c1 complex, complex III, CIII) and cytochrome c oxidase (complex IV, CIV), that cooperate to transfer electrons derived from NADH and succinate to molecular oxygen, creating an electrochemical gradient over the inner membrane that drives transmembrane transport and the ATP synthase. Cytochrome c oxidase is the component of the respiratory chain that catalyzes the reduction of oxygen to water. Electrons originating from reduced cytochrome c in the intermembrane space (IMS) are transferred via the dinuclear copper A center (CU(A)) of subunit 2 and heme A of subunit 1 to the active site in subunit 1, a binuclear center (BNC) formed by heme A3 and copper B (CU(B)). The BNC reduces molecular oxygen to 2 water molecules using 4 electrons from cytochrome c in the IMS and 4 protons from the mitochondrial matrix.</text>
</comment>
<comment type="catalytic activity">
    <reaction evidence="2">
        <text>4 Fe(II)-[cytochrome c] + O2 + 8 H(+)(in) = 4 Fe(III)-[cytochrome c] + 2 H2O + 4 H(+)(out)</text>
        <dbReference type="Rhea" id="RHEA:11436"/>
        <dbReference type="Rhea" id="RHEA-COMP:10350"/>
        <dbReference type="Rhea" id="RHEA-COMP:14399"/>
        <dbReference type="ChEBI" id="CHEBI:15377"/>
        <dbReference type="ChEBI" id="CHEBI:15378"/>
        <dbReference type="ChEBI" id="CHEBI:15379"/>
        <dbReference type="ChEBI" id="CHEBI:29033"/>
        <dbReference type="ChEBI" id="CHEBI:29034"/>
        <dbReference type="EC" id="7.1.1.9"/>
    </reaction>
    <physiologicalReaction direction="left-to-right" evidence="2">
        <dbReference type="Rhea" id="RHEA:11437"/>
    </physiologicalReaction>
</comment>
<comment type="cofactor">
    <cofactor evidence="3">
        <name>Cu cation</name>
        <dbReference type="ChEBI" id="CHEBI:23378"/>
    </cofactor>
    <text evidence="3">Binds a dinuclear copper A center per subunit.</text>
</comment>
<comment type="subunit">
    <text evidence="1 3">Component of the cytochrome c oxidase (complex IV, CIV), a multisubunit enzyme composed of 14 subunits. The complex is composed of a catalytic core of 3 subunits MT-CO1, MT-CO2 and MT-CO3, encoded in the mitochondrial DNA, and 11 supernumerary subunits COX4I, COX5A, COX5B, COX6A, COX6B, COX6C, COX7A, COX7B, COX7C, COX8 and NDUFA4, which are encoded in the nuclear genome. The complex exists as a monomer or a dimer and forms supercomplexes (SCs) in the inner mitochondrial membrane with NADH-ubiquinone oxidoreductase (complex I, CI) and ubiquinol-cytochrome c oxidoreductase (cytochrome b-c1 complex, complex III, CIII), resulting in different assemblies (supercomplex SCI(1)III(2)IV(1) and megacomplex MCI(2)III(2)IV(2)) (By similarity). Found in a complex with TMEM177, COA6, COX18, COX20, SCO1 and SCO2. Interacts with TMEM177 in a COX20-dependent manner. Interacts with COX20. Interacts with COX16 (By similarity).</text>
</comment>
<comment type="subcellular location">
    <subcellularLocation>
        <location evidence="3">Mitochondrion inner membrane</location>
        <topology evidence="3">Multi-pass membrane protein</topology>
    </subcellularLocation>
</comment>
<comment type="similarity">
    <text evidence="4">Belongs to the cytochrome c oxidase subunit 2 family.</text>
</comment>
<accession>Q37741</accession>
<geneLocation type="mitochondrion"/>
<dbReference type="EC" id="7.1.1.9"/>
<dbReference type="EMBL" id="X76364">
    <property type="protein sequence ID" value="CAA53966.1"/>
    <property type="status" value="ALT_TERM"/>
    <property type="molecule type" value="Genomic_DNA"/>
</dbReference>
<dbReference type="EMBL" id="X99772">
    <property type="status" value="NOT_ANNOTATED_CDS"/>
    <property type="molecule type" value="Genomic_DNA"/>
</dbReference>
<dbReference type="SMR" id="Q37741"/>
<dbReference type="CTD" id="4513"/>
<dbReference type="OrthoDB" id="539285at2759"/>
<dbReference type="Proteomes" id="UP000694546">
    <property type="component" value="Unplaced"/>
</dbReference>
<dbReference type="GO" id="GO:0005743">
    <property type="term" value="C:mitochondrial inner membrane"/>
    <property type="evidence" value="ECO:0007669"/>
    <property type="project" value="UniProtKB-SubCell"/>
</dbReference>
<dbReference type="GO" id="GO:0045277">
    <property type="term" value="C:respiratory chain complex IV"/>
    <property type="evidence" value="ECO:0000250"/>
    <property type="project" value="UniProtKB"/>
</dbReference>
<dbReference type="GO" id="GO:0005507">
    <property type="term" value="F:copper ion binding"/>
    <property type="evidence" value="ECO:0007669"/>
    <property type="project" value="InterPro"/>
</dbReference>
<dbReference type="GO" id="GO:0004129">
    <property type="term" value="F:cytochrome-c oxidase activity"/>
    <property type="evidence" value="ECO:0007669"/>
    <property type="project" value="UniProtKB-EC"/>
</dbReference>
<dbReference type="GO" id="GO:0042773">
    <property type="term" value="P:ATP synthesis coupled electron transport"/>
    <property type="evidence" value="ECO:0007669"/>
    <property type="project" value="TreeGrafter"/>
</dbReference>
<dbReference type="CDD" id="cd13912">
    <property type="entry name" value="CcO_II_C"/>
    <property type="match status" value="1"/>
</dbReference>
<dbReference type="FunFam" id="1.10.287.90:FF:000001">
    <property type="entry name" value="Cytochrome c oxidase subunit 2"/>
    <property type="match status" value="1"/>
</dbReference>
<dbReference type="FunFam" id="2.60.40.420:FF:000001">
    <property type="entry name" value="Cytochrome c oxidase subunit 2"/>
    <property type="match status" value="1"/>
</dbReference>
<dbReference type="Gene3D" id="1.10.287.90">
    <property type="match status" value="1"/>
</dbReference>
<dbReference type="Gene3D" id="2.60.40.420">
    <property type="entry name" value="Cupredoxins - blue copper proteins"/>
    <property type="match status" value="1"/>
</dbReference>
<dbReference type="InterPro" id="IPR045187">
    <property type="entry name" value="CcO_II"/>
</dbReference>
<dbReference type="InterPro" id="IPR002429">
    <property type="entry name" value="CcO_II-like_C"/>
</dbReference>
<dbReference type="InterPro" id="IPR034210">
    <property type="entry name" value="CcO_II_C"/>
</dbReference>
<dbReference type="InterPro" id="IPR001505">
    <property type="entry name" value="Copper_CuA"/>
</dbReference>
<dbReference type="InterPro" id="IPR008972">
    <property type="entry name" value="Cupredoxin"/>
</dbReference>
<dbReference type="InterPro" id="IPR014222">
    <property type="entry name" value="Cyt_c_oxidase_su2"/>
</dbReference>
<dbReference type="InterPro" id="IPR011759">
    <property type="entry name" value="Cyt_c_oxidase_su2_TM_dom"/>
</dbReference>
<dbReference type="InterPro" id="IPR036257">
    <property type="entry name" value="Cyt_c_oxidase_su2_TM_sf"/>
</dbReference>
<dbReference type="NCBIfam" id="TIGR02866">
    <property type="entry name" value="CoxB"/>
    <property type="match status" value="1"/>
</dbReference>
<dbReference type="PANTHER" id="PTHR22888:SF9">
    <property type="entry name" value="CYTOCHROME C OXIDASE SUBUNIT 2"/>
    <property type="match status" value="1"/>
</dbReference>
<dbReference type="PANTHER" id="PTHR22888">
    <property type="entry name" value="CYTOCHROME C OXIDASE, SUBUNIT II"/>
    <property type="match status" value="1"/>
</dbReference>
<dbReference type="Pfam" id="PF00116">
    <property type="entry name" value="COX2"/>
    <property type="match status" value="1"/>
</dbReference>
<dbReference type="Pfam" id="PF02790">
    <property type="entry name" value="COX2_TM"/>
    <property type="match status" value="1"/>
</dbReference>
<dbReference type="PRINTS" id="PR01166">
    <property type="entry name" value="CYCOXIDASEII"/>
</dbReference>
<dbReference type="SUPFAM" id="SSF49503">
    <property type="entry name" value="Cupredoxins"/>
    <property type="match status" value="1"/>
</dbReference>
<dbReference type="SUPFAM" id="SSF81464">
    <property type="entry name" value="Cytochrome c oxidase subunit II-like, transmembrane region"/>
    <property type="match status" value="1"/>
</dbReference>
<dbReference type="PROSITE" id="PS00078">
    <property type="entry name" value="COX2"/>
    <property type="match status" value="1"/>
</dbReference>
<dbReference type="PROSITE" id="PS50857">
    <property type="entry name" value="COX2_CUA"/>
    <property type="match status" value="1"/>
</dbReference>
<dbReference type="PROSITE" id="PS50999">
    <property type="entry name" value="COX2_TM"/>
    <property type="match status" value="1"/>
</dbReference>
<proteinExistence type="inferred from homology"/>